<feature type="chain" id="PRO_0000348218" description="Cysteine--tRNA ligase, cytoplasmic">
    <location>
        <begin position="1"/>
        <end position="741"/>
    </location>
</feature>
<feature type="region of interest" description="Disordered" evidence="2">
    <location>
        <begin position="697"/>
        <end position="718"/>
    </location>
</feature>
<feature type="short sequence motif" description="'HIGH' region" evidence="1">
    <location>
        <begin position="48"/>
        <end position="58"/>
    </location>
</feature>
<feature type="short sequence motif" description="'KMSKS' region" evidence="1">
    <location>
        <begin position="398"/>
        <end position="402"/>
    </location>
</feature>
<feature type="compositionally biased region" description="Basic and acidic residues" evidence="2">
    <location>
        <begin position="704"/>
        <end position="713"/>
    </location>
</feature>
<feature type="binding site" evidence="1">
    <location>
        <position position="46"/>
    </location>
    <ligand>
        <name>Zn(2+)</name>
        <dbReference type="ChEBI" id="CHEBI:29105"/>
    </ligand>
</feature>
<feature type="binding site" evidence="1">
    <location>
        <position position="340"/>
    </location>
    <ligand>
        <name>Zn(2+)</name>
        <dbReference type="ChEBI" id="CHEBI:29105"/>
    </ligand>
</feature>
<feature type="binding site" evidence="1">
    <location>
        <position position="365"/>
    </location>
    <ligand>
        <name>Zn(2+)</name>
        <dbReference type="ChEBI" id="CHEBI:29105"/>
    </ligand>
</feature>
<feature type="binding site" evidence="1">
    <location>
        <position position="369"/>
    </location>
    <ligand>
        <name>Zn(2+)</name>
        <dbReference type="ChEBI" id="CHEBI:29105"/>
    </ligand>
</feature>
<feature type="binding site" evidence="1">
    <location>
        <position position="401"/>
    </location>
    <ligand>
        <name>ATP</name>
        <dbReference type="ChEBI" id="CHEBI:30616"/>
    </ligand>
</feature>
<feature type="modified residue" description="Phosphoserine" evidence="3">
    <location>
        <position position="297"/>
    </location>
</feature>
<evidence type="ECO:0000250" key="1"/>
<evidence type="ECO:0000256" key="2">
    <source>
        <dbReference type="SAM" id="MobiDB-lite"/>
    </source>
</evidence>
<evidence type="ECO:0000269" key="3">
    <source>
    </source>
</evidence>
<evidence type="ECO:0000305" key="4"/>
<evidence type="ECO:0000312" key="5">
    <source>
        <dbReference type="FlyBase" id="FBgn0027091"/>
    </source>
</evidence>
<sequence>MSKRGQPAWQAPEAVDRPKLKLFNSLTRQKEDFVPLDGNNVTWYSCGPTVYDASHMGHARSYISFDILRRILSDYFGYNIHYVMNITDIDDKIIRRARQNHLFDEYAAEAQKLPLDELLGQQKEVLQRFQDTCAKNTDPDKKIMLDKTLQRMNDAVEALTKAVGKGDEREISEKRLLYLNEAKDPISDWLDSLKGAQINDNAVFEALPRYWEDQFHNDMKSLNILPPDVLTRVSEYVPQIVTFIQKIIDNGLAYAANNSVYFDVNGFDKREKHHYAKLVPEAYGDTKSLQEGEGDLSIAEDRLSEKRSANDFALWKASKAGEPWWDSPWGKGRPGWHIECSAMASDIFGPTFDIHTGGVDLKFPHHDNELAQSEAAFNESEWVKYFLHTGHLTIAGCKMSKSLKNFVTIQEALKKHSATQLRLAFLLHSWKDTLDYSENTMEMATQYEKFLNEFFLNVKDLTRHVLSEEPRRQFDAWTEVEAALQKKFSNAQVQVHASLCDNIDTRSALDAIRELVSVSNVYIRDNKTRLNSLLLRNVATYITDLLHVFGAISGPRGGIGFPVSGGSGAQAAGADLETTVLPYVQSLAEFRYLVREQAKTLKAFDILKLCDDLRDNVLPNLGVRLEDKDIGKYAVKLVDRDSLLREREAKLAAEAEKAAEKERKKQAAAEAAAAKEAQRRVNPKEMFLAETEKYSAFDENGLPTHDKEGKEVSKGQIKKLQKLQQQQEQRYNEYLASIEKA</sequence>
<name>SYCC_DROME</name>
<accession>Q7KN90</accession>
<dbReference type="EC" id="6.1.1.16"/>
<dbReference type="EMBL" id="AE013599">
    <property type="protein sequence ID" value="AAF58057.1"/>
    <property type="molecule type" value="Genomic_DNA"/>
</dbReference>
<dbReference type="EMBL" id="AF132160">
    <property type="protein sequence ID" value="AAD34748.1"/>
    <property type="molecule type" value="mRNA"/>
</dbReference>
<dbReference type="RefSeq" id="NP_611087.1">
    <property type="nucleotide sequence ID" value="NM_137243.3"/>
</dbReference>
<dbReference type="SMR" id="Q7KN90"/>
<dbReference type="FunCoup" id="Q7KN90">
    <property type="interactions" value="2471"/>
</dbReference>
<dbReference type="IntAct" id="Q7KN90">
    <property type="interactions" value="5"/>
</dbReference>
<dbReference type="STRING" id="7227.FBpp0086373"/>
<dbReference type="iPTMnet" id="Q7KN90"/>
<dbReference type="PaxDb" id="7227-FBpp0086373"/>
<dbReference type="EnsemblMetazoa" id="FBtr0087234">
    <property type="protein sequence ID" value="FBpp0086373"/>
    <property type="gene ID" value="FBgn0027091"/>
</dbReference>
<dbReference type="GeneID" id="36784"/>
<dbReference type="KEGG" id="dme:Dmel_CG8431"/>
<dbReference type="UCSC" id="CG8431-RA">
    <property type="organism name" value="d. melanogaster"/>
</dbReference>
<dbReference type="AGR" id="FB:FBgn0027091"/>
<dbReference type="CTD" id="36784"/>
<dbReference type="FlyBase" id="FBgn0027091">
    <property type="gene designation" value="CysRS"/>
</dbReference>
<dbReference type="VEuPathDB" id="VectorBase:FBgn0027091"/>
<dbReference type="eggNOG" id="KOG2007">
    <property type="taxonomic scope" value="Eukaryota"/>
</dbReference>
<dbReference type="GeneTree" id="ENSGT00390000006347"/>
<dbReference type="HOGENOM" id="CLU_013528_3_3_1"/>
<dbReference type="InParanoid" id="Q7KN90"/>
<dbReference type="OMA" id="FHNDMKS"/>
<dbReference type="OrthoDB" id="438179at2759"/>
<dbReference type="PhylomeDB" id="Q7KN90"/>
<dbReference type="SignaLink" id="Q7KN90"/>
<dbReference type="BioGRID-ORCS" id="36784">
    <property type="hits" value="1 hit in 3 CRISPR screens"/>
</dbReference>
<dbReference type="GenomeRNAi" id="36784"/>
<dbReference type="PRO" id="PR:Q7KN90"/>
<dbReference type="Proteomes" id="UP000000803">
    <property type="component" value="Chromosome 2R"/>
</dbReference>
<dbReference type="Bgee" id="FBgn0027091">
    <property type="expression patterns" value="Expressed in embryonic/larval hemocyte (Drosophila) and 48 other cell types or tissues"/>
</dbReference>
<dbReference type="GO" id="GO:0005737">
    <property type="term" value="C:cytoplasm"/>
    <property type="evidence" value="ECO:0000250"/>
    <property type="project" value="UniProtKB"/>
</dbReference>
<dbReference type="GO" id="GO:0005524">
    <property type="term" value="F:ATP binding"/>
    <property type="evidence" value="ECO:0000318"/>
    <property type="project" value="GO_Central"/>
</dbReference>
<dbReference type="GO" id="GO:0004817">
    <property type="term" value="F:cysteine-tRNA ligase activity"/>
    <property type="evidence" value="ECO:0000250"/>
    <property type="project" value="UniProtKB"/>
</dbReference>
<dbReference type="GO" id="GO:0046872">
    <property type="term" value="F:metal ion binding"/>
    <property type="evidence" value="ECO:0007669"/>
    <property type="project" value="UniProtKB-KW"/>
</dbReference>
<dbReference type="GO" id="GO:0000049">
    <property type="term" value="F:tRNA binding"/>
    <property type="evidence" value="ECO:0000250"/>
    <property type="project" value="UniProtKB"/>
</dbReference>
<dbReference type="GO" id="GO:0006423">
    <property type="term" value="P:cysteinyl-tRNA aminoacylation"/>
    <property type="evidence" value="ECO:0000250"/>
    <property type="project" value="UniProtKB"/>
</dbReference>
<dbReference type="CDD" id="cd00672">
    <property type="entry name" value="CysRS_core"/>
    <property type="match status" value="1"/>
</dbReference>
<dbReference type="Gene3D" id="3.40.50.620">
    <property type="entry name" value="HUPs"/>
    <property type="match status" value="1"/>
</dbReference>
<dbReference type="HAMAP" id="MF_00041">
    <property type="entry name" value="Cys_tRNA_synth"/>
    <property type="match status" value="1"/>
</dbReference>
<dbReference type="InterPro" id="IPR015803">
    <property type="entry name" value="Cys-tRNA-ligase"/>
</dbReference>
<dbReference type="InterPro" id="IPR024909">
    <property type="entry name" value="Cys-tRNA/MSH_ligase"/>
</dbReference>
<dbReference type="InterPro" id="IPR014729">
    <property type="entry name" value="Rossmann-like_a/b/a_fold"/>
</dbReference>
<dbReference type="InterPro" id="IPR032678">
    <property type="entry name" value="tRNA-synt_1_cat_dom"/>
</dbReference>
<dbReference type="InterPro" id="IPR009080">
    <property type="entry name" value="tRNAsynth_Ia_anticodon-bd"/>
</dbReference>
<dbReference type="NCBIfam" id="TIGR00435">
    <property type="entry name" value="cysS"/>
    <property type="match status" value="1"/>
</dbReference>
<dbReference type="PANTHER" id="PTHR10890:SF3">
    <property type="entry name" value="CYSTEINE--TRNA LIGASE, CYTOPLASMIC"/>
    <property type="match status" value="1"/>
</dbReference>
<dbReference type="PANTHER" id="PTHR10890">
    <property type="entry name" value="CYSTEINYL-TRNA SYNTHETASE"/>
    <property type="match status" value="1"/>
</dbReference>
<dbReference type="Pfam" id="PF01406">
    <property type="entry name" value="tRNA-synt_1e"/>
    <property type="match status" value="1"/>
</dbReference>
<dbReference type="PRINTS" id="PR00983">
    <property type="entry name" value="TRNASYNTHCYS"/>
</dbReference>
<dbReference type="SUPFAM" id="SSF47323">
    <property type="entry name" value="Anticodon-binding domain of a subclass of class I aminoacyl-tRNA synthetases"/>
    <property type="match status" value="1"/>
</dbReference>
<dbReference type="SUPFAM" id="SSF52374">
    <property type="entry name" value="Nucleotidylyl transferase"/>
    <property type="match status" value="1"/>
</dbReference>
<reference key="1">
    <citation type="journal article" date="2000" name="Science">
        <title>The genome sequence of Drosophila melanogaster.</title>
        <authorList>
            <person name="Adams M.D."/>
            <person name="Celniker S.E."/>
            <person name="Holt R.A."/>
            <person name="Evans C.A."/>
            <person name="Gocayne J.D."/>
            <person name="Amanatides P.G."/>
            <person name="Scherer S.E."/>
            <person name="Li P.W."/>
            <person name="Hoskins R.A."/>
            <person name="Galle R.F."/>
            <person name="George R.A."/>
            <person name="Lewis S.E."/>
            <person name="Richards S."/>
            <person name="Ashburner M."/>
            <person name="Henderson S.N."/>
            <person name="Sutton G.G."/>
            <person name="Wortman J.R."/>
            <person name="Yandell M.D."/>
            <person name="Zhang Q."/>
            <person name="Chen L.X."/>
            <person name="Brandon R.C."/>
            <person name="Rogers Y.-H.C."/>
            <person name="Blazej R.G."/>
            <person name="Champe M."/>
            <person name="Pfeiffer B.D."/>
            <person name="Wan K.H."/>
            <person name="Doyle C."/>
            <person name="Baxter E.G."/>
            <person name="Helt G."/>
            <person name="Nelson C.R."/>
            <person name="Miklos G.L.G."/>
            <person name="Abril J.F."/>
            <person name="Agbayani A."/>
            <person name="An H.-J."/>
            <person name="Andrews-Pfannkoch C."/>
            <person name="Baldwin D."/>
            <person name="Ballew R.M."/>
            <person name="Basu A."/>
            <person name="Baxendale J."/>
            <person name="Bayraktaroglu L."/>
            <person name="Beasley E.M."/>
            <person name="Beeson K.Y."/>
            <person name="Benos P.V."/>
            <person name="Berman B.P."/>
            <person name="Bhandari D."/>
            <person name="Bolshakov S."/>
            <person name="Borkova D."/>
            <person name="Botchan M.R."/>
            <person name="Bouck J."/>
            <person name="Brokstein P."/>
            <person name="Brottier P."/>
            <person name="Burtis K.C."/>
            <person name="Busam D.A."/>
            <person name="Butler H."/>
            <person name="Cadieu E."/>
            <person name="Center A."/>
            <person name="Chandra I."/>
            <person name="Cherry J.M."/>
            <person name="Cawley S."/>
            <person name="Dahlke C."/>
            <person name="Davenport L.B."/>
            <person name="Davies P."/>
            <person name="de Pablos B."/>
            <person name="Delcher A."/>
            <person name="Deng Z."/>
            <person name="Mays A.D."/>
            <person name="Dew I."/>
            <person name="Dietz S.M."/>
            <person name="Dodson K."/>
            <person name="Doup L.E."/>
            <person name="Downes M."/>
            <person name="Dugan-Rocha S."/>
            <person name="Dunkov B.C."/>
            <person name="Dunn P."/>
            <person name="Durbin K.J."/>
            <person name="Evangelista C.C."/>
            <person name="Ferraz C."/>
            <person name="Ferriera S."/>
            <person name="Fleischmann W."/>
            <person name="Fosler C."/>
            <person name="Gabrielian A.E."/>
            <person name="Garg N.S."/>
            <person name="Gelbart W.M."/>
            <person name="Glasser K."/>
            <person name="Glodek A."/>
            <person name="Gong F."/>
            <person name="Gorrell J.H."/>
            <person name="Gu Z."/>
            <person name="Guan P."/>
            <person name="Harris M."/>
            <person name="Harris N.L."/>
            <person name="Harvey D.A."/>
            <person name="Heiman T.J."/>
            <person name="Hernandez J.R."/>
            <person name="Houck J."/>
            <person name="Hostin D."/>
            <person name="Houston K.A."/>
            <person name="Howland T.J."/>
            <person name="Wei M.-H."/>
            <person name="Ibegwam C."/>
            <person name="Jalali M."/>
            <person name="Kalush F."/>
            <person name="Karpen G.H."/>
            <person name="Ke Z."/>
            <person name="Kennison J.A."/>
            <person name="Ketchum K.A."/>
            <person name="Kimmel B.E."/>
            <person name="Kodira C.D."/>
            <person name="Kraft C.L."/>
            <person name="Kravitz S."/>
            <person name="Kulp D."/>
            <person name="Lai Z."/>
            <person name="Lasko P."/>
            <person name="Lei Y."/>
            <person name="Levitsky A.A."/>
            <person name="Li J.H."/>
            <person name="Li Z."/>
            <person name="Liang Y."/>
            <person name="Lin X."/>
            <person name="Liu X."/>
            <person name="Mattei B."/>
            <person name="McIntosh T.C."/>
            <person name="McLeod M.P."/>
            <person name="McPherson D."/>
            <person name="Merkulov G."/>
            <person name="Milshina N.V."/>
            <person name="Mobarry C."/>
            <person name="Morris J."/>
            <person name="Moshrefi A."/>
            <person name="Mount S.M."/>
            <person name="Moy M."/>
            <person name="Murphy B."/>
            <person name="Murphy L."/>
            <person name="Muzny D.M."/>
            <person name="Nelson D.L."/>
            <person name="Nelson D.R."/>
            <person name="Nelson K.A."/>
            <person name="Nixon K."/>
            <person name="Nusskern D.R."/>
            <person name="Pacleb J.M."/>
            <person name="Palazzolo M."/>
            <person name="Pittman G.S."/>
            <person name="Pan S."/>
            <person name="Pollard J."/>
            <person name="Puri V."/>
            <person name="Reese M.G."/>
            <person name="Reinert K."/>
            <person name="Remington K."/>
            <person name="Saunders R.D.C."/>
            <person name="Scheeler F."/>
            <person name="Shen H."/>
            <person name="Shue B.C."/>
            <person name="Siden-Kiamos I."/>
            <person name="Simpson M."/>
            <person name="Skupski M.P."/>
            <person name="Smith T.J."/>
            <person name="Spier E."/>
            <person name="Spradling A.C."/>
            <person name="Stapleton M."/>
            <person name="Strong R."/>
            <person name="Sun E."/>
            <person name="Svirskas R."/>
            <person name="Tector C."/>
            <person name="Turner R."/>
            <person name="Venter E."/>
            <person name="Wang A.H."/>
            <person name="Wang X."/>
            <person name="Wang Z.-Y."/>
            <person name="Wassarman D.A."/>
            <person name="Weinstock G.M."/>
            <person name="Weissenbach J."/>
            <person name="Williams S.M."/>
            <person name="Woodage T."/>
            <person name="Worley K.C."/>
            <person name="Wu D."/>
            <person name="Yang S."/>
            <person name="Yao Q.A."/>
            <person name="Ye J."/>
            <person name="Yeh R.-F."/>
            <person name="Zaveri J.S."/>
            <person name="Zhan M."/>
            <person name="Zhang G."/>
            <person name="Zhao Q."/>
            <person name="Zheng L."/>
            <person name="Zheng X.H."/>
            <person name="Zhong F.N."/>
            <person name="Zhong W."/>
            <person name="Zhou X."/>
            <person name="Zhu S.C."/>
            <person name="Zhu X."/>
            <person name="Smith H.O."/>
            <person name="Gibbs R.A."/>
            <person name="Myers E.W."/>
            <person name="Rubin G.M."/>
            <person name="Venter J.C."/>
        </authorList>
    </citation>
    <scope>NUCLEOTIDE SEQUENCE [LARGE SCALE GENOMIC DNA]</scope>
    <source>
        <strain>Berkeley</strain>
    </source>
</reference>
<reference key="2">
    <citation type="journal article" date="2002" name="Genome Biol.">
        <title>Annotation of the Drosophila melanogaster euchromatic genome: a systematic review.</title>
        <authorList>
            <person name="Misra S."/>
            <person name="Crosby M.A."/>
            <person name="Mungall C.J."/>
            <person name="Matthews B.B."/>
            <person name="Campbell K.S."/>
            <person name="Hradecky P."/>
            <person name="Huang Y."/>
            <person name="Kaminker J.S."/>
            <person name="Millburn G.H."/>
            <person name="Prochnik S.E."/>
            <person name="Smith C.D."/>
            <person name="Tupy J.L."/>
            <person name="Whitfield E.J."/>
            <person name="Bayraktaroglu L."/>
            <person name="Berman B.P."/>
            <person name="Bettencourt B.R."/>
            <person name="Celniker S.E."/>
            <person name="de Grey A.D.N.J."/>
            <person name="Drysdale R.A."/>
            <person name="Harris N.L."/>
            <person name="Richter J."/>
            <person name="Russo S."/>
            <person name="Schroeder A.J."/>
            <person name="Shu S.Q."/>
            <person name="Stapleton M."/>
            <person name="Yamada C."/>
            <person name="Ashburner M."/>
            <person name="Gelbart W.M."/>
            <person name="Rubin G.M."/>
            <person name="Lewis S.E."/>
        </authorList>
    </citation>
    <scope>GENOME REANNOTATION</scope>
    <source>
        <strain>Berkeley</strain>
    </source>
</reference>
<reference key="3">
    <citation type="journal article" date="2000" name="Science">
        <title>A Drosophila complementary DNA resource.</title>
        <authorList>
            <person name="Rubin G.M."/>
            <person name="Hong L."/>
            <person name="Brokstein P."/>
            <person name="Evans-Holm M."/>
            <person name="Frise E."/>
            <person name="Stapleton M."/>
            <person name="Harvey D.A."/>
        </authorList>
    </citation>
    <scope>NUCLEOTIDE SEQUENCE [LARGE SCALE MRNA]</scope>
    <source>
        <strain>Berkeley</strain>
        <tissue>Embryo</tissue>
    </source>
</reference>
<reference key="4">
    <citation type="journal article" date="2007" name="Mol. Biosyst.">
        <title>An integrated chemical, mass spectrometric and computational strategy for (quantitative) phosphoproteomics: application to Drosophila melanogaster Kc167 cells.</title>
        <authorList>
            <person name="Bodenmiller B."/>
            <person name="Mueller L.N."/>
            <person name="Pedrioli P.G.A."/>
            <person name="Pflieger D."/>
            <person name="Juenger M.A."/>
            <person name="Eng J.K."/>
            <person name="Aebersold R."/>
            <person name="Tao W.A."/>
        </authorList>
    </citation>
    <scope>PHOSPHORYLATION [LARGE SCALE ANALYSIS] AT SER-297</scope>
    <scope>IDENTIFICATION BY MASS SPECTROMETRY</scope>
</reference>
<proteinExistence type="evidence at protein level"/>
<keyword id="KW-0030">Aminoacyl-tRNA synthetase</keyword>
<keyword id="KW-0067">ATP-binding</keyword>
<keyword id="KW-0963">Cytoplasm</keyword>
<keyword id="KW-0436">Ligase</keyword>
<keyword id="KW-0479">Metal-binding</keyword>
<keyword id="KW-0547">Nucleotide-binding</keyword>
<keyword id="KW-0597">Phosphoprotein</keyword>
<keyword id="KW-0648">Protein biosynthesis</keyword>
<keyword id="KW-1185">Reference proteome</keyword>
<keyword id="KW-0862">Zinc</keyword>
<comment type="catalytic activity">
    <reaction>
        <text>tRNA(Cys) + L-cysteine + ATP = L-cysteinyl-tRNA(Cys) + AMP + diphosphate</text>
        <dbReference type="Rhea" id="RHEA:17773"/>
        <dbReference type="Rhea" id="RHEA-COMP:9661"/>
        <dbReference type="Rhea" id="RHEA-COMP:9679"/>
        <dbReference type="ChEBI" id="CHEBI:30616"/>
        <dbReference type="ChEBI" id="CHEBI:33019"/>
        <dbReference type="ChEBI" id="CHEBI:35235"/>
        <dbReference type="ChEBI" id="CHEBI:78442"/>
        <dbReference type="ChEBI" id="CHEBI:78517"/>
        <dbReference type="ChEBI" id="CHEBI:456215"/>
        <dbReference type="EC" id="6.1.1.16"/>
    </reaction>
</comment>
<comment type="cofactor">
    <cofactor evidence="1">
        <name>Zn(2+)</name>
        <dbReference type="ChEBI" id="CHEBI:29105"/>
    </cofactor>
    <text evidence="1">Binds 1 zinc ion per subunit.</text>
</comment>
<comment type="subcellular location">
    <subcellularLocation>
        <location evidence="1">Cytoplasm</location>
    </subcellularLocation>
</comment>
<comment type="similarity">
    <text evidence="4">Belongs to the class-I aminoacyl-tRNA synthetase family.</text>
</comment>
<organism>
    <name type="scientific">Drosophila melanogaster</name>
    <name type="common">Fruit fly</name>
    <dbReference type="NCBI Taxonomy" id="7227"/>
    <lineage>
        <taxon>Eukaryota</taxon>
        <taxon>Metazoa</taxon>
        <taxon>Ecdysozoa</taxon>
        <taxon>Arthropoda</taxon>
        <taxon>Hexapoda</taxon>
        <taxon>Insecta</taxon>
        <taxon>Pterygota</taxon>
        <taxon>Neoptera</taxon>
        <taxon>Endopterygota</taxon>
        <taxon>Diptera</taxon>
        <taxon>Brachycera</taxon>
        <taxon>Muscomorpha</taxon>
        <taxon>Ephydroidea</taxon>
        <taxon>Drosophilidae</taxon>
        <taxon>Drosophila</taxon>
        <taxon>Sophophora</taxon>
    </lineage>
</organism>
<gene>
    <name evidence="5" type="primary">CysRS</name>
    <name evidence="5" type="synonym">Aats-cys</name>
    <name evidence="5" type="ORF">CG8431</name>
</gene>
<protein>
    <recommendedName>
        <fullName>Cysteine--tRNA ligase, cytoplasmic</fullName>
        <ecNumber>6.1.1.16</ecNumber>
    </recommendedName>
    <alternativeName>
        <fullName evidence="5">Cysteinyl-tRNA synthetase</fullName>
    </alternativeName>
</protein>